<sequence>MTKIYDAANWSKHEDDFTQMFYNQNVKQFWLPEEIALNGDLLTWKYLGKNEQDTYMKVLAGLTLLDTEQGNTGMPIVAEHVDGHQRKAVLNFMAMMENAVHAKSYSNIFLTLAPTEQINEVFEWVKNNRFLQKKARTIVSVYKTIKKNDEISLFKGMVASVFLESFLFYSGFYYPLYFYGQGKLMQSGEIINLIIRDEAIHGVYVGLLAQEIYKKQTPQKQKELYAWALNLLQELYENELEYTEDVYDQVGLAPDVKKFIRYNANKALNNLGFDHWFEEEDVNPIVINGLNTKTKSHDFFSTKGNGYKKATVEPLKDSDFIFTEKGCIQ</sequence>
<reference key="1">
    <citation type="journal article" date="1998" name="Proc. Natl. Acad. Sci. U.S.A.">
        <title>Introns and intein coding sequence in the ribonucleotide reductase genes of Bacillus subtilis temperate bacteriophage SPbeta.</title>
        <authorList>
            <person name="Lazarevic V."/>
            <person name="Soldo B."/>
            <person name="Duesterhoeft A."/>
            <person name="Hilbert H."/>
            <person name="Maueel C."/>
            <person name="Karamata D."/>
        </authorList>
    </citation>
    <scope>NUCLEOTIDE SEQUENCE [GENOMIC DNA / MRNA]</scope>
    <scope>SPLICING</scope>
</reference>
<dbReference type="EC" id="1.17.4.1"/>
<dbReference type="EMBL" id="AF020713">
    <property type="protein sequence ID" value="AAC13135.1"/>
    <property type="molecule type" value="Genomic_DNA"/>
</dbReference>
<dbReference type="PIR" id="T12926">
    <property type="entry name" value="T12926"/>
</dbReference>
<dbReference type="RefSeq" id="NP_046714.1">
    <property type="nucleotide sequence ID" value="NC_001884.1"/>
</dbReference>
<dbReference type="SMR" id="O64174"/>
<dbReference type="GeneID" id="1261446"/>
<dbReference type="KEGG" id="vg:1261446"/>
<dbReference type="Proteomes" id="UP000009091">
    <property type="component" value="Genome"/>
</dbReference>
<dbReference type="GO" id="GO:0046872">
    <property type="term" value="F:metal ion binding"/>
    <property type="evidence" value="ECO:0007669"/>
    <property type="project" value="UniProtKB-KW"/>
</dbReference>
<dbReference type="GO" id="GO:0004748">
    <property type="term" value="F:ribonucleoside-diphosphate reductase activity, thioredoxin disulfide as acceptor"/>
    <property type="evidence" value="ECO:0007669"/>
    <property type="project" value="UniProtKB-EC"/>
</dbReference>
<dbReference type="GO" id="GO:0009263">
    <property type="term" value="P:deoxyribonucleotide biosynthetic process"/>
    <property type="evidence" value="ECO:0007669"/>
    <property type="project" value="UniProtKB-KW"/>
</dbReference>
<dbReference type="CDD" id="cd01049">
    <property type="entry name" value="RNRR2"/>
    <property type="match status" value="1"/>
</dbReference>
<dbReference type="Gene3D" id="1.10.620.20">
    <property type="entry name" value="Ribonucleotide Reductase, subunit A"/>
    <property type="match status" value="1"/>
</dbReference>
<dbReference type="InterPro" id="IPR009078">
    <property type="entry name" value="Ferritin-like_SF"/>
</dbReference>
<dbReference type="InterPro" id="IPR012348">
    <property type="entry name" value="RNR-like"/>
</dbReference>
<dbReference type="InterPro" id="IPR026494">
    <property type="entry name" value="RNR_NrdF-like"/>
</dbReference>
<dbReference type="InterPro" id="IPR033909">
    <property type="entry name" value="RNR_small"/>
</dbReference>
<dbReference type="InterPro" id="IPR030475">
    <property type="entry name" value="RNR_small_AS"/>
</dbReference>
<dbReference type="InterPro" id="IPR000358">
    <property type="entry name" value="RNR_small_fam"/>
</dbReference>
<dbReference type="NCBIfam" id="NF007183">
    <property type="entry name" value="PRK09614.1-2"/>
    <property type="match status" value="1"/>
</dbReference>
<dbReference type="NCBIfam" id="TIGR04171">
    <property type="entry name" value="RNR_1b_NrdF"/>
    <property type="match status" value="1"/>
</dbReference>
<dbReference type="PANTHER" id="PTHR23409">
    <property type="entry name" value="RIBONUCLEOSIDE-DIPHOSPHATE REDUCTASE SMALL CHAIN"/>
    <property type="match status" value="1"/>
</dbReference>
<dbReference type="PANTHER" id="PTHR23409:SF18">
    <property type="entry name" value="RIBONUCLEOSIDE-DIPHOSPHATE REDUCTASE SUBUNIT M2"/>
    <property type="match status" value="1"/>
</dbReference>
<dbReference type="Pfam" id="PF00268">
    <property type="entry name" value="Ribonuc_red_sm"/>
    <property type="match status" value="1"/>
</dbReference>
<dbReference type="PIRSF" id="PIRSF000355">
    <property type="entry name" value="NrdB"/>
    <property type="match status" value="1"/>
</dbReference>
<dbReference type="SUPFAM" id="SSF47240">
    <property type="entry name" value="Ferritin-like"/>
    <property type="match status" value="1"/>
</dbReference>
<dbReference type="PROSITE" id="PS00368">
    <property type="entry name" value="RIBORED_SMALL"/>
    <property type="match status" value="1"/>
</dbReference>
<gene>
    <name type="primary">bnrdF</name>
    <name type="synonym">yosP</name>
</gene>
<comment type="function">
    <text evidence="1">Provides the precursors necessary for DNA synthesis. Catalyzes the biosynthesis of deoxyribonucleotides from the corresponding ribonucleotides (By similarity).</text>
</comment>
<comment type="catalytic activity">
    <reaction evidence="2">
        <text>a 2'-deoxyribonucleoside 5'-diphosphate + [thioredoxin]-disulfide + H2O = a ribonucleoside 5'-diphosphate + [thioredoxin]-dithiol</text>
        <dbReference type="Rhea" id="RHEA:23252"/>
        <dbReference type="Rhea" id="RHEA-COMP:10698"/>
        <dbReference type="Rhea" id="RHEA-COMP:10700"/>
        <dbReference type="ChEBI" id="CHEBI:15377"/>
        <dbReference type="ChEBI" id="CHEBI:29950"/>
        <dbReference type="ChEBI" id="CHEBI:50058"/>
        <dbReference type="ChEBI" id="CHEBI:57930"/>
        <dbReference type="ChEBI" id="CHEBI:73316"/>
        <dbReference type="EC" id="1.17.4.1"/>
    </reaction>
</comment>
<comment type="cofactor">
    <cofactor evidence="1">
        <name>Fe cation</name>
        <dbReference type="ChEBI" id="CHEBI:24875"/>
    </cofactor>
    <text evidence="1">Binds 2 iron ions per subunit.</text>
</comment>
<comment type="subunit">
    <text evidence="1">Tetramer of two alpha and two beta subunits.</text>
</comment>
<comment type="miscellaneous">
    <text>This gene has an intron within which is encoded yosQ, a putative homing endonuclease.</text>
</comment>
<comment type="similarity">
    <text evidence="3">Belongs to the ribonucleoside diphosphate reductase small chain family.</text>
</comment>
<organismHost>
    <name type="scientific">Bacillus pumilus</name>
    <name type="common">Bacillus mesentericus</name>
    <dbReference type="NCBI Taxonomy" id="1408"/>
</organismHost>
<organismHost>
    <name type="scientific">Bacillus subtilis</name>
    <dbReference type="NCBI Taxonomy" id="1423"/>
</organismHost>
<evidence type="ECO:0000250" key="1"/>
<evidence type="ECO:0000255" key="2">
    <source>
        <dbReference type="PROSITE-ProRule" id="PRU10014"/>
    </source>
</evidence>
<evidence type="ECO:0000305" key="3"/>
<feature type="chain" id="PRO_0000389011" description="Ribonucleoside-diphosphate reductase subunit beta">
    <location>
        <begin position="1"/>
        <end position="329"/>
    </location>
</feature>
<feature type="active site" evidence="2">
    <location>
        <position position="105"/>
    </location>
</feature>
<feature type="binding site" evidence="2">
    <location>
        <position position="66"/>
    </location>
    <ligand>
        <name>Fe cation</name>
        <dbReference type="ChEBI" id="CHEBI:24875"/>
        <label>1</label>
    </ligand>
</feature>
<feature type="binding site" evidence="2">
    <location>
        <position position="97"/>
    </location>
    <ligand>
        <name>Fe cation</name>
        <dbReference type="ChEBI" id="CHEBI:24875"/>
        <label>1</label>
    </ligand>
</feature>
<feature type="binding site" evidence="1">
    <location>
        <position position="97"/>
    </location>
    <ligand>
        <name>Fe cation</name>
        <dbReference type="ChEBI" id="CHEBI:24875"/>
        <label>2</label>
    </ligand>
</feature>
<feature type="binding site" evidence="2">
    <location>
        <position position="101"/>
    </location>
    <ligand>
        <name>Fe cation</name>
        <dbReference type="ChEBI" id="CHEBI:24875"/>
        <label>1</label>
    </ligand>
</feature>
<feature type="binding site" evidence="1">
    <location>
        <position position="164"/>
    </location>
    <ligand>
        <name>Fe cation</name>
        <dbReference type="ChEBI" id="CHEBI:24875"/>
        <label>2</label>
    </ligand>
</feature>
<feature type="binding site" evidence="1">
    <location>
        <position position="198"/>
    </location>
    <ligand>
        <name>Fe cation</name>
        <dbReference type="ChEBI" id="CHEBI:24875"/>
        <label>2</label>
    </ligand>
</feature>
<feature type="binding site" evidence="1">
    <location>
        <position position="201"/>
    </location>
    <ligand>
        <name>Fe cation</name>
        <dbReference type="ChEBI" id="CHEBI:24875"/>
        <label>2</label>
    </ligand>
</feature>
<accession>O64174</accession>
<protein>
    <recommendedName>
        <fullName>Ribonucleoside-diphosphate reductase subunit beta</fullName>
        <ecNumber>1.17.4.1</ecNumber>
    </recommendedName>
    <alternativeName>
        <fullName>Ribonucleotide reductase small subunit</fullName>
    </alternativeName>
</protein>
<keyword id="KW-0215">Deoxyribonucleotide synthesis</keyword>
<keyword id="KW-0408">Iron</keyword>
<keyword id="KW-0479">Metal-binding</keyword>
<keyword id="KW-0560">Oxidoreductase</keyword>
<keyword id="KW-1185">Reference proteome</keyword>
<proteinExistence type="evidence at transcript level"/>
<name>BNRDF_BPSPB</name>
<organism>
    <name type="scientific">Bacillus phage SPbeta</name>
    <name type="common">Bacillus phage SPBc2</name>
    <name type="synonym">Bacteriophage SP-beta</name>
    <dbReference type="NCBI Taxonomy" id="2932878"/>
    <lineage>
        <taxon>Viruses</taxon>
        <taxon>Duplodnaviria</taxon>
        <taxon>Heunggongvirae</taxon>
        <taxon>Uroviricota</taxon>
        <taxon>Caudoviricetes</taxon>
        <taxon>Spbetavirus</taxon>
        <taxon>Spbetavirus SPbeta</taxon>
    </lineage>
</organism>